<comment type="function">
    <text evidence="1">Assembles around the rod to form the L-ring and probably protects the motor/basal body from shearing forces during rotation.</text>
</comment>
<comment type="subunit">
    <text evidence="1">The basal body constitutes a major portion of the flagellar organelle and consists of four rings (L,P,S, and M) mounted on a central rod.</text>
</comment>
<comment type="subcellular location">
    <subcellularLocation>
        <location evidence="1">Cell outer membrane</location>
        <topology evidence="1">Lipid-anchor</topology>
    </subcellularLocation>
    <subcellularLocation>
        <location evidence="1">Bacterial flagellum basal body</location>
    </subcellularLocation>
</comment>
<comment type="similarity">
    <text evidence="3">Belongs to the FlgH family.</text>
</comment>
<proteinExistence type="inferred from homology"/>
<evidence type="ECO:0000250" key="1"/>
<evidence type="ECO:0000255" key="2"/>
<evidence type="ECO:0000305" key="3"/>
<reference key="1">
    <citation type="journal article" date="2005" name="Science">
        <title>Life at depth: Photobacterium profundum genome sequence and expression analysis.</title>
        <authorList>
            <person name="Vezzi A."/>
            <person name="Campanaro S."/>
            <person name="D'Angelo M."/>
            <person name="Simonato F."/>
            <person name="Vitulo N."/>
            <person name="Lauro F.M."/>
            <person name="Cestaro A."/>
            <person name="Malacrida G."/>
            <person name="Simionati B."/>
            <person name="Cannata N."/>
            <person name="Romualdi C."/>
            <person name="Bartlett D.H."/>
            <person name="Valle G."/>
        </authorList>
    </citation>
    <scope>NUCLEOTIDE SEQUENCE [LARGE SCALE GENOMIC DNA]</scope>
    <source>
        <strain>ATCC BAA-1253 / SS9</strain>
    </source>
</reference>
<accession>Q6LTQ7</accession>
<sequence length="256" mass="27752">MKKVLAGIVILLLNGCAMDPDLAPSDIEKATTTVDAVEGSTEQDSGLIDMLRRREDPQAGDPAWNPIRPQAKPEHYATATGSLFSSIQAQDLYDDTKPRGIGDIVTVMLEEKTQAKKSASSDLDKSTDLSMDPLVLGGKPLTIGDRDLSYEVANANKFSGTTSADQSNSIKGSISVEVIDVLANGNLMIRGEKWLTLNTGDEYIRVSGTIRPDDISQENTIESTRITNARIQYSGTGNRQDVQEQGWLANFFNVSL</sequence>
<name>FLGH_PHOPR</name>
<gene>
    <name type="primary">flgH</name>
    <name type="ordered locus">PBPRA0907</name>
</gene>
<organism>
    <name type="scientific">Photobacterium profundum (strain SS9)</name>
    <dbReference type="NCBI Taxonomy" id="298386"/>
    <lineage>
        <taxon>Bacteria</taxon>
        <taxon>Pseudomonadati</taxon>
        <taxon>Pseudomonadota</taxon>
        <taxon>Gammaproteobacteria</taxon>
        <taxon>Vibrionales</taxon>
        <taxon>Vibrionaceae</taxon>
        <taxon>Photobacterium</taxon>
    </lineage>
</organism>
<protein>
    <recommendedName>
        <fullName>Flagellar L-ring protein</fullName>
    </recommendedName>
    <alternativeName>
        <fullName>Basal body L-ring protein</fullName>
    </alternativeName>
</protein>
<dbReference type="EMBL" id="CR378665">
    <property type="protein sequence ID" value="CAG19318.1"/>
    <property type="molecule type" value="Genomic_DNA"/>
</dbReference>
<dbReference type="RefSeq" id="WP_011217655.1">
    <property type="nucleotide sequence ID" value="NC_006370.1"/>
</dbReference>
<dbReference type="SMR" id="Q6LTQ7"/>
<dbReference type="STRING" id="298386.PBPRA0907"/>
<dbReference type="KEGG" id="ppr:PBPRA0907"/>
<dbReference type="eggNOG" id="COG2063">
    <property type="taxonomic scope" value="Bacteria"/>
</dbReference>
<dbReference type="HOGENOM" id="CLU_069313_0_2_6"/>
<dbReference type="Proteomes" id="UP000000593">
    <property type="component" value="Chromosome 1"/>
</dbReference>
<dbReference type="GO" id="GO:0009427">
    <property type="term" value="C:bacterial-type flagellum basal body, distal rod, L ring"/>
    <property type="evidence" value="ECO:0007669"/>
    <property type="project" value="InterPro"/>
</dbReference>
<dbReference type="GO" id="GO:0009279">
    <property type="term" value="C:cell outer membrane"/>
    <property type="evidence" value="ECO:0007669"/>
    <property type="project" value="UniProtKB-SubCell"/>
</dbReference>
<dbReference type="GO" id="GO:0003774">
    <property type="term" value="F:cytoskeletal motor activity"/>
    <property type="evidence" value="ECO:0007669"/>
    <property type="project" value="InterPro"/>
</dbReference>
<dbReference type="GO" id="GO:0071973">
    <property type="term" value="P:bacterial-type flagellum-dependent cell motility"/>
    <property type="evidence" value="ECO:0007669"/>
    <property type="project" value="InterPro"/>
</dbReference>
<dbReference type="HAMAP" id="MF_00415">
    <property type="entry name" value="FlgH"/>
    <property type="match status" value="1"/>
</dbReference>
<dbReference type="InterPro" id="IPR000527">
    <property type="entry name" value="Flag_Lring"/>
</dbReference>
<dbReference type="NCBIfam" id="NF001302">
    <property type="entry name" value="PRK00249.1-2"/>
    <property type="match status" value="1"/>
</dbReference>
<dbReference type="PANTHER" id="PTHR34933">
    <property type="entry name" value="FLAGELLAR L-RING PROTEIN"/>
    <property type="match status" value="1"/>
</dbReference>
<dbReference type="PANTHER" id="PTHR34933:SF1">
    <property type="entry name" value="FLAGELLAR L-RING PROTEIN"/>
    <property type="match status" value="1"/>
</dbReference>
<dbReference type="Pfam" id="PF02107">
    <property type="entry name" value="FlgH"/>
    <property type="match status" value="1"/>
</dbReference>
<dbReference type="PRINTS" id="PR01008">
    <property type="entry name" value="FLGLRINGFLGH"/>
</dbReference>
<keyword id="KW-0975">Bacterial flagellum</keyword>
<keyword id="KW-0998">Cell outer membrane</keyword>
<keyword id="KW-0449">Lipoprotein</keyword>
<keyword id="KW-0472">Membrane</keyword>
<keyword id="KW-0564">Palmitate</keyword>
<keyword id="KW-1185">Reference proteome</keyword>
<keyword id="KW-0732">Signal</keyword>
<feature type="signal peptide" evidence="2">
    <location>
        <begin position="1"/>
        <end position="15"/>
    </location>
</feature>
<feature type="chain" id="PRO_0000009458" description="Flagellar L-ring protein">
    <location>
        <begin position="16"/>
        <end position="256"/>
    </location>
</feature>
<feature type="lipid moiety-binding region" description="N-palmitoyl cysteine" evidence="2">
    <location>
        <position position="16"/>
    </location>
</feature>
<feature type="lipid moiety-binding region" description="S-diacylglycerol cysteine" evidence="2">
    <location>
        <position position="16"/>
    </location>
</feature>